<feature type="chain" id="PRO_0000327581" description="Succinate dehydrogenase assembly factor 2, mitochondrial">
    <location>
        <begin position="1"/>
        <end position="141"/>
    </location>
</feature>
<sequence length="141" mass="16471">MFKSIKQIKSSIGFITTNTTRRNFCSNKIGGFTIKNVEDESKIKINNEISEIEKLRKKLLYQSKERGMLENDLLLGSFATLNIHKLTESQLRDYNLLLQQPDPDIFNWILKKAEVPEEFETEVLKLVQHHCKNDPLGYTRK</sequence>
<comment type="function">
    <text evidence="1">Plays an essential role in the assembly of succinate dehydrogenase (SDH), an enzyme complex (also referred to as respiratory complex II) that is a component of both the tricarboxylic acid (TCA) cycle and the mitochondrial electron transport chain, and which couples the oxidation of succinate to fumarate with the reduction of ubiquinone (coenzyme Q) to ubiquinol. Required for flavinylation (covalent attachment of FAD) of the flavoprotein subunit of the SDH catalytic dimer.</text>
</comment>
<comment type="subunit">
    <text evidence="1">Interacts with the flavoprotein subunit within the SDH catalytic dimer.</text>
</comment>
<comment type="subcellular location">
    <subcellularLocation>
        <location evidence="1">Mitochondrion matrix</location>
    </subcellularLocation>
</comment>
<comment type="miscellaneous">
    <text evidence="1">This protein may be expected to contain an N-terminal transit peptide but none has been predicted.</text>
</comment>
<comment type="similarity">
    <text evidence="1">Belongs to the SDHAF2 family.</text>
</comment>
<gene>
    <name type="ORF">DDB_G0293946</name>
</gene>
<dbReference type="EMBL" id="AAFI02000224">
    <property type="protein sequence ID" value="EAL60472.1"/>
    <property type="molecule type" value="Genomic_DNA"/>
</dbReference>
<dbReference type="RefSeq" id="XP_628896.1">
    <property type="nucleotide sequence ID" value="XM_628894.1"/>
</dbReference>
<dbReference type="SMR" id="Q54B20"/>
<dbReference type="FunCoup" id="Q54B20">
    <property type="interactions" value="29"/>
</dbReference>
<dbReference type="STRING" id="44689.Q54B20"/>
<dbReference type="PaxDb" id="44689-DDB0266372"/>
<dbReference type="EnsemblProtists" id="EAL60472">
    <property type="protein sequence ID" value="EAL60472"/>
    <property type="gene ID" value="DDB_G0293946"/>
</dbReference>
<dbReference type="GeneID" id="8629512"/>
<dbReference type="KEGG" id="ddi:DDB_G0293946"/>
<dbReference type="dictyBase" id="DDB_G0293946"/>
<dbReference type="VEuPathDB" id="AmoebaDB:DDB_G0293946"/>
<dbReference type="eggNOG" id="KOG3326">
    <property type="taxonomic scope" value="Eukaryota"/>
</dbReference>
<dbReference type="HOGENOM" id="CLU_1828946_0_0_1"/>
<dbReference type="InParanoid" id="Q54B20"/>
<dbReference type="OMA" id="DIFQWIV"/>
<dbReference type="PhylomeDB" id="Q54B20"/>
<dbReference type="Reactome" id="R-DDI-9854311">
    <property type="pathway name" value="Maturation of TCA enzymes and regulation of TCA cycle"/>
</dbReference>
<dbReference type="PRO" id="PR:Q54B20"/>
<dbReference type="Proteomes" id="UP000002195">
    <property type="component" value="Chromosome 6"/>
</dbReference>
<dbReference type="GO" id="GO:0005759">
    <property type="term" value="C:mitochondrial matrix"/>
    <property type="evidence" value="ECO:0007669"/>
    <property type="project" value="UniProtKB-SubCell"/>
</dbReference>
<dbReference type="GO" id="GO:0005739">
    <property type="term" value="C:mitochondrion"/>
    <property type="evidence" value="ECO:0000250"/>
    <property type="project" value="UniProtKB"/>
</dbReference>
<dbReference type="GO" id="GO:0006121">
    <property type="term" value="P:mitochondrial electron transport, succinate to ubiquinone"/>
    <property type="evidence" value="ECO:0000250"/>
    <property type="project" value="UniProtKB"/>
</dbReference>
<dbReference type="GO" id="GO:0034553">
    <property type="term" value="P:mitochondrial respiratory chain complex II assembly"/>
    <property type="evidence" value="ECO:0000318"/>
    <property type="project" value="GO_Central"/>
</dbReference>
<dbReference type="GO" id="GO:0018293">
    <property type="term" value="P:protein-FAD linkage"/>
    <property type="evidence" value="ECO:0000250"/>
    <property type="project" value="UniProtKB"/>
</dbReference>
<dbReference type="GO" id="GO:0006099">
    <property type="term" value="P:tricarboxylic acid cycle"/>
    <property type="evidence" value="ECO:0000318"/>
    <property type="project" value="GO_Central"/>
</dbReference>
<dbReference type="FunFam" id="1.10.150.250:FF:000002">
    <property type="entry name" value="Succinate dehydrogenase assembly factor 2, mitochondrial"/>
    <property type="match status" value="1"/>
</dbReference>
<dbReference type="Gene3D" id="1.10.150.250">
    <property type="entry name" value="Flavinator of succinate dehydrogenase"/>
    <property type="match status" value="1"/>
</dbReference>
<dbReference type="HAMAP" id="MF_03057">
    <property type="entry name" value="SDHAF2"/>
    <property type="match status" value="1"/>
</dbReference>
<dbReference type="InterPro" id="IPR005631">
    <property type="entry name" value="SDH"/>
</dbReference>
<dbReference type="InterPro" id="IPR036714">
    <property type="entry name" value="SDH_sf"/>
</dbReference>
<dbReference type="InterPro" id="IPR028882">
    <property type="entry name" value="SDHAF2"/>
</dbReference>
<dbReference type="PANTHER" id="PTHR12469">
    <property type="entry name" value="PROTEIN EMI5 HOMOLOG, MITOCHONDRIAL"/>
    <property type="match status" value="1"/>
</dbReference>
<dbReference type="PANTHER" id="PTHR12469:SF2">
    <property type="entry name" value="SUCCINATE DEHYDROGENASE ASSEMBLY FACTOR 2, MITOCHONDRIAL"/>
    <property type="match status" value="1"/>
</dbReference>
<dbReference type="Pfam" id="PF03937">
    <property type="entry name" value="Sdh5"/>
    <property type="match status" value="1"/>
</dbReference>
<dbReference type="SUPFAM" id="SSF109910">
    <property type="entry name" value="YgfY-like"/>
    <property type="match status" value="1"/>
</dbReference>
<organism>
    <name type="scientific">Dictyostelium discoideum</name>
    <name type="common">Social amoeba</name>
    <dbReference type="NCBI Taxonomy" id="44689"/>
    <lineage>
        <taxon>Eukaryota</taxon>
        <taxon>Amoebozoa</taxon>
        <taxon>Evosea</taxon>
        <taxon>Eumycetozoa</taxon>
        <taxon>Dictyostelia</taxon>
        <taxon>Dictyosteliales</taxon>
        <taxon>Dictyosteliaceae</taxon>
        <taxon>Dictyostelium</taxon>
    </lineage>
</organism>
<accession>Q54B20</accession>
<evidence type="ECO:0000255" key="1">
    <source>
        <dbReference type="HAMAP-Rule" id="MF_03057"/>
    </source>
</evidence>
<name>SDHF2_DICDI</name>
<keyword id="KW-0143">Chaperone</keyword>
<keyword id="KW-0496">Mitochondrion</keyword>
<keyword id="KW-1185">Reference proteome</keyword>
<proteinExistence type="inferred from homology"/>
<protein>
    <recommendedName>
        <fullName evidence="1">Succinate dehydrogenase assembly factor 2, mitochondrial</fullName>
        <shortName evidence="1">SDH assembly factor 2</shortName>
        <shortName evidence="1">SDHAF2</shortName>
    </recommendedName>
</protein>
<reference key="1">
    <citation type="journal article" date="2005" name="Nature">
        <title>The genome of the social amoeba Dictyostelium discoideum.</title>
        <authorList>
            <person name="Eichinger L."/>
            <person name="Pachebat J.A."/>
            <person name="Gloeckner G."/>
            <person name="Rajandream M.A."/>
            <person name="Sucgang R."/>
            <person name="Berriman M."/>
            <person name="Song J."/>
            <person name="Olsen R."/>
            <person name="Szafranski K."/>
            <person name="Xu Q."/>
            <person name="Tunggal B."/>
            <person name="Kummerfeld S."/>
            <person name="Madera M."/>
            <person name="Konfortov B.A."/>
            <person name="Rivero F."/>
            <person name="Bankier A.T."/>
            <person name="Lehmann R."/>
            <person name="Hamlin N."/>
            <person name="Davies R."/>
            <person name="Gaudet P."/>
            <person name="Fey P."/>
            <person name="Pilcher K."/>
            <person name="Chen G."/>
            <person name="Saunders D."/>
            <person name="Sodergren E.J."/>
            <person name="Davis P."/>
            <person name="Kerhornou A."/>
            <person name="Nie X."/>
            <person name="Hall N."/>
            <person name="Anjard C."/>
            <person name="Hemphill L."/>
            <person name="Bason N."/>
            <person name="Farbrother P."/>
            <person name="Desany B."/>
            <person name="Just E."/>
            <person name="Morio T."/>
            <person name="Rost R."/>
            <person name="Churcher C.M."/>
            <person name="Cooper J."/>
            <person name="Haydock S."/>
            <person name="van Driessche N."/>
            <person name="Cronin A."/>
            <person name="Goodhead I."/>
            <person name="Muzny D.M."/>
            <person name="Mourier T."/>
            <person name="Pain A."/>
            <person name="Lu M."/>
            <person name="Harper D."/>
            <person name="Lindsay R."/>
            <person name="Hauser H."/>
            <person name="James K.D."/>
            <person name="Quiles M."/>
            <person name="Madan Babu M."/>
            <person name="Saito T."/>
            <person name="Buchrieser C."/>
            <person name="Wardroper A."/>
            <person name="Felder M."/>
            <person name="Thangavelu M."/>
            <person name="Johnson D."/>
            <person name="Knights A."/>
            <person name="Loulseged H."/>
            <person name="Mungall K.L."/>
            <person name="Oliver K."/>
            <person name="Price C."/>
            <person name="Quail M.A."/>
            <person name="Urushihara H."/>
            <person name="Hernandez J."/>
            <person name="Rabbinowitsch E."/>
            <person name="Steffen D."/>
            <person name="Sanders M."/>
            <person name="Ma J."/>
            <person name="Kohara Y."/>
            <person name="Sharp S."/>
            <person name="Simmonds M.N."/>
            <person name="Spiegler S."/>
            <person name="Tivey A."/>
            <person name="Sugano S."/>
            <person name="White B."/>
            <person name="Walker D."/>
            <person name="Woodward J.R."/>
            <person name="Winckler T."/>
            <person name="Tanaka Y."/>
            <person name="Shaulsky G."/>
            <person name="Schleicher M."/>
            <person name="Weinstock G.M."/>
            <person name="Rosenthal A."/>
            <person name="Cox E.C."/>
            <person name="Chisholm R.L."/>
            <person name="Gibbs R.A."/>
            <person name="Loomis W.F."/>
            <person name="Platzer M."/>
            <person name="Kay R.R."/>
            <person name="Williams J.G."/>
            <person name="Dear P.H."/>
            <person name="Noegel A.A."/>
            <person name="Barrell B.G."/>
            <person name="Kuspa A."/>
        </authorList>
    </citation>
    <scope>NUCLEOTIDE SEQUENCE [LARGE SCALE GENOMIC DNA]</scope>
    <source>
        <strain>AX4</strain>
    </source>
</reference>